<dbReference type="EC" id="3.6.1.27" evidence="1"/>
<dbReference type="EMBL" id="CP000912">
    <property type="protein sequence ID" value="ABY39988.1"/>
    <property type="molecule type" value="Genomic_DNA"/>
</dbReference>
<dbReference type="RefSeq" id="WP_006074159.1">
    <property type="nucleotide sequence ID" value="NC_010167.1"/>
</dbReference>
<dbReference type="SMR" id="A9WW52"/>
<dbReference type="KEGG" id="bmt:BSUIS_B1037"/>
<dbReference type="HOGENOM" id="CLU_060296_2_0_5"/>
<dbReference type="Proteomes" id="UP000008545">
    <property type="component" value="Chromosome II"/>
</dbReference>
<dbReference type="GO" id="GO:0005886">
    <property type="term" value="C:plasma membrane"/>
    <property type="evidence" value="ECO:0007669"/>
    <property type="project" value="UniProtKB-SubCell"/>
</dbReference>
<dbReference type="GO" id="GO:0050380">
    <property type="term" value="F:undecaprenyl-diphosphatase activity"/>
    <property type="evidence" value="ECO:0007669"/>
    <property type="project" value="UniProtKB-UniRule"/>
</dbReference>
<dbReference type="GO" id="GO:0071555">
    <property type="term" value="P:cell wall organization"/>
    <property type="evidence" value="ECO:0007669"/>
    <property type="project" value="UniProtKB-KW"/>
</dbReference>
<dbReference type="GO" id="GO:0009252">
    <property type="term" value="P:peptidoglycan biosynthetic process"/>
    <property type="evidence" value="ECO:0007669"/>
    <property type="project" value="UniProtKB-KW"/>
</dbReference>
<dbReference type="GO" id="GO:0008360">
    <property type="term" value="P:regulation of cell shape"/>
    <property type="evidence" value="ECO:0007669"/>
    <property type="project" value="UniProtKB-KW"/>
</dbReference>
<dbReference type="GO" id="GO:0046677">
    <property type="term" value="P:response to antibiotic"/>
    <property type="evidence" value="ECO:0007669"/>
    <property type="project" value="UniProtKB-UniRule"/>
</dbReference>
<dbReference type="HAMAP" id="MF_01006">
    <property type="entry name" value="Undec_diphosphatase"/>
    <property type="match status" value="1"/>
</dbReference>
<dbReference type="InterPro" id="IPR003824">
    <property type="entry name" value="UppP"/>
</dbReference>
<dbReference type="NCBIfam" id="NF001389">
    <property type="entry name" value="PRK00281.1-2"/>
    <property type="match status" value="1"/>
</dbReference>
<dbReference type="NCBIfam" id="TIGR00753">
    <property type="entry name" value="undec_PP_bacA"/>
    <property type="match status" value="1"/>
</dbReference>
<dbReference type="PANTHER" id="PTHR30622">
    <property type="entry name" value="UNDECAPRENYL-DIPHOSPHATASE"/>
    <property type="match status" value="1"/>
</dbReference>
<dbReference type="PANTHER" id="PTHR30622:SF3">
    <property type="entry name" value="UNDECAPRENYL-DIPHOSPHATASE"/>
    <property type="match status" value="1"/>
</dbReference>
<dbReference type="Pfam" id="PF02673">
    <property type="entry name" value="BacA"/>
    <property type="match status" value="1"/>
</dbReference>
<gene>
    <name evidence="1" type="primary">uppP</name>
    <name type="ordered locus">BSUIS_B1037</name>
</gene>
<sequence>MVFFNLLEAAFLGLIEGLTEFIPVSSTGHLLLIGHFLGFESTGKTFEVLIQLGAILAILSVYSAKLARIATDFPRDARTRRFVLGVLVAFLPAAVIGALAHGFIKGVLFETPMLVCIMLIVGGFILLWVDQLNLRPRYHNVMDYPLPICLAIGFIQCLAMIPGVSRSGSTIVGSLLLGADKRSAAEFSFFLAMPTMAGAFAYDLFKSRNILSFNDGALIVVGFIMAFISGVFVVRHLLDYVSRHGFALFGWWRLIVGSAGMAALIIWG</sequence>
<keyword id="KW-0046">Antibiotic resistance</keyword>
<keyword id="KW-0997">Cell inner membrane</keyword>
<keyword id="KW-1003">Cell membrane</keyword>
<keyword id="KW-0133">Cell shape</keyword>
<keyword id="KW-0961">Cell wall biogenesis/degradation</keyword>
<keyword id="KW-0378">Hydrolase</keyword>
<keyword id="KW-0472">Membrane</keyword>
<keyword id="KW-0573">Peptidoglycan synthesis</keyword>
<keyword id="KW-0812">Transmembrane</keyword>
<keyword id="KW-1133">Transmembrane helix</keyword>
<reference key="1">
    <citation type="submission" date="2007-12" db="EMBL/GenBank/DDBJ databases">
        <title>Brucella suis ATCC 23445 whole genome shotgun sequencing project.</title>
        <authorList>
            <person name="Setubal J.C."/>
            <person name="Bowns C."/>
            <person name="Boyle S."/>
            <person name="Crasta O.R."/>
            <person name="Czar M.J."/>
            <person name="Dharmanolla C."/>
            <person name="Gillespie J.J."/>
            <person name="Kenyon R.W."/>
            <person name="Lu J."/>
            <person name="Mane S."/>
            <person name="Mohapatra S."/>
            <person name="Nagrani S."/>
            <person name="Purkayastha A."/>
            <person name="Rajasimha H.K."/>
            <person name="Shallom J.M."/>
            <person name="Shallom S."/>
            <person name="Shukla M."/>
            <person name="Snyder E.E."/>
            <person name="Sobral B.W."/>
            <person name="Wattam A.R."/>
            <person name="Will R."/>
            <person name="Williams K."/>
            <person name="Yoo H."/>
            <person name="Bruce D."/>
            <person name="Detter C."/>
            <person name="Munk C."/>
            <person name="Brettin T.S."/>
        </authorList>
    </citation>
    <scope>NUCLEOTIDE SEQUENCE [LARGE SCALE GENOMIC DNA]</scope>
    <source>
        <strain>ATCC 23445 / NCTC 10510</strain>
    </source>
</reference>
<organism>
    <name type="scientific">Brucella suis (strain ATCC 23445 / NCTC 10510)</name>
    <dbReference type="NCBI Taxonomy" id="470137"/>
    <lineage>
        <taxon>Bacteria</taxon>
        <taxon>Pseudomonadati</taxon>
        <taxon>Pseudomonadota</taxon>
        <taxon>Alphaproteobacteria</taxon>
        <taxon>Hyphomicrobiales</taxon>
        <taxon>Brucellaceae</taxon>
        <taxon>Brucella/Ochrobactrum group</taxon>
        <taxon>Brucella</taxon>
    </lineage>
</organism>
<name>UPPP_BRUSI</name>
<evidence type="ECO:0000255" key="1">
    <source>
        <dbReference type="HAMAP-Rule" id="MF_01006"/>
    </source>
</evidence>
<feature type="chain" id="PRO_1000083975" description="Undecaprenyl-diphosphatase">
    <location>
        <begin position="1"/>
        <end position="268"/>
    </location>
</feature>
<feature type="transmembrane region" description="Helical" evidence="1">
    <location>
        <begin position="11"/>
        <end position="33"/>
    </location>
</feature>
<feature type="transmembrane region" description="Helical" evidence="1">
    <location>
        <begin position="46"/>
        <end position="66"/>
    </location>
</feature>
<feature type="transmembrane region" description="Helical" evidence="1">
    <location>
        <begin position="84"/>
        <end position="104"/>
    </location>
</feature>
<feature type="transmembrane region" description="Helical" evidence="1">
    <location>
        <begin position="107"/>
        <end position="127"/>
    </location>
</feature>
<feature type="transmembrane region" description="Helical" evidence="1">
    <location>
        <begin position="144"/>
        <end position="164"/>
    </location>
</feature>
<feature type="transmembrane region" description="Helical" evidence="1">
    <location>
        <begin position="185"/>
        <end position="205"/>
    </location>
</feature>
<feature type="transmembrane region" description="Helical" evidence="1">
    <location>
        <begin position="213"/>
        <end position="233"/>
    </location>
</feature>
<feature type="transmembrane region" description="Helical" evidence="1">
    <location>
        <begin position="246"/>
        <end position="266"/>
    </location>
</feature>
<proteinExistence type="inferred from homology"/>
<comment type="function">
    <text evidence="1">Catalyzes the dephosphorylation of undecaprenyl diphosphate (UPP). Confers resistance to bacitracin.</text>
</comment>
<comment type="catalytic activity">
    <reaction evidence="1">
        <text>di-trans,octa-cis-undecaprenyl diphosphate + H2O = di-trans,octa-cis-undecaprenyl phosphate + phosphate + H(+)</text>
        <dbReference type="Rhea" id="RHEA:28094"/>
        <dbReference type="ChEBI" id="CHEBI:15377"/>
        <dbReference type="ChEBI" id="CHEBI:15378"/>
        <dbReference type="ChEBI" id="CHEBI:43474"/>
        <dbReference type="ChEBI" id="CHEBI:58405"/>
        <dbReference type="ChEBI" id="CHEBI:60392"/>
        <dbReference type="EC" id="3.6.1.27"/>
    </reaction>
</comment>
<comment type="subcellular location">
    <subcellularLocation>
        <location evidence="1">Cell inner membrane</location>
        <topology evidence="1">Multi-pass membrane protein</topology>
    </subcellularLocation>
</comment>
<comment type="miscellaneous">
    <text>Bacitracin is thought to be involved in the inhibition of peptidoglycan synthesis by sequestering undecaprenyl diphosphate, thereby reducing the pool of lipid carrier available.</text>
</comment>
<comment type="similarity">
    <text evidence="1">Belongs to the UppP family.</text>
</comment>
<accession>A9WW52</accession>
<protein>
    <recommendedName>
        <fullName evidence="1">Undecaprenyl-diphosphatase</fullName>
        <ecNumber evidence="1">3.6.1.27</ecNumber>
    </recommendedName>
    <alternativeName>
        <fullName evidence="1">Bacitracin resistance protein</fullName>
    </alternativeName>
    <alternativeName>
        <fullName evidence="1">Undecaprenyl pyrophosphate phosphatase</fullName>
    </alternativeName>
</protein>